<feature type="chain" id="PRO_0000307502" description="Triosephosphate isomerase">
    <location>
        <begin position="1"/>
        <end position="261"/>
    </location>
</feature>
<feature type="active site" description="Electrophile" evidence="1">
    <location>
        <position position="100"/>
    </location>
</feature>
<feature type="active site" description="Proton acceptor" evidence="1">
    <location>
        <position position="172"/>
    </location>
</feature>
<feature type="binding site" evidence="1">
    <location>
        <begin position="10"/>
        <end position="12"/>
    </location>
    <ligand>
        <name>substrate</name>
    </ligand>
</feature>
<feature type="binding site" evidence="1">
    <location>
        <position position="178"/>
    </location>
    <ligand>
        <name>substrate</name>
    </ligand>
</feature>
<feature type="binding site" evidence="1">
    <location>
        <position position="218"/>
    </location>
    <ligand>
        <name>substrate</name>
    </ligand>
</feature>
<feature type="binding site" evidence="1">
    <location>
        <begin position="239"/>
        <end position="240"/>
    </location>
    <ligand>
        <name>substrate</name>
    </ligand>
</feature>
<name>TPIS_MYCA1</name>
<proteinExistence type="inferred from homology"/>
<evidence type="ECO:0000255" key="1">
    <source>
        <dbReference type="HAMAP-Rule" id="MF_00147"/>
    </source>
</evidence>
<comment type="function">
    <text evidence="1">Involved in the gluconeogenesis. Catalyzes stereospecifically the conversion of dihydroxyacetone phosphate (DHAP) to D-glyceraldehyde-3-phosphate (G3P).</text>
</comment>
<comment type="catalytic activity">
    <reaction evidence="1">
        <text>D-glyceraldehyde 3-phosphate = dihydroxyacetone phosphate</text>
        <dbReference type="Rhea" id="RHEA:18585"/>
        <dbReference type="ChEBI" id="CHEBI:57642"/>
        <dbReference type="ChEBI" id="CHEBI:59776"/>
        <dbReference type="EC" id="5.3.1.1"/>
    </reaction>
</comment>
<comment type="pathway">
    <text evidence="1">Carbohydrate biosynthesis; gluconeogenesis.</text>
</comment>
<comment type="pathway">
    <text evidence="1">Carbohydrate degradation; glycolysis; D-glyceraldehyde 3-phosphate from glycerone phosphate: step 1/1.</text>
</comment>
<comment type="subunit">
    <text evidence="1">Homodimer.</text>
</comment>
<comment type="subcellular location">
    <subcellularLocation>
        <location evidence="1">Cytoplasm</location>
    </subcellularLocation>
</comment>
<comment type="similarity">
    <text evidence="1">Belongs to the triosephosphate isomerase family.</text>
</comment>
<dbReference type="EC" id="5.3.1.1" evidence="1"/>
<dbReference type="EMBL" id="CP000479">
    <property type="protein sequence ID" value="ABK67669.1"/>
    <property type="molecule type" value="Genomic_DNA"/>
</dbReference>
<dbReference type="RefSeq" id="WP_009977607.1">
    <property type="nucleotide sequence ID" value="NC_008595.1"/>
</dbReference>
<dbReference type="SMR" id="A0QHY3"/>
<dbReference type="GeneID" id="75270741"/>
<dbReference type="KEGG" id="mav:MAV_3339"/>
<dbReference type="HOGENOM" id="CLU_024251_2_3_11"/>
<dbReference type="UniPathway" id="UPA00109">
    <property type="reaction ID" value="UER00189"/>
</dbReference>
<dbReference type="UniPathway" id="UPA00138"/>
<dbReference type="Proteomes" id="UP000001574">
    <property type="component" value="Chromosome"/>
</dbReference>
<dbReference type="GO" id="GO:0005829">
    <property type="term" value="C:cytosol"/>
    <property type="evidence" value="ECO:0007669"/>
    <property type="project" value="TreeGrafter"/>
</dbReference>
<dbReference type="GO" id="GO:0004807">
    <property type="term" value="F:triose-phosphate isomerase activity"/>
    <property type="evidence" value="ECO:0007669"/>
    <property type="project" value="UniProtKB-UniRule"/>
</dbReference>
<dbReference type="GO" id="GO:0006094">
    <property type="term" value="P:gluconeogenesis"/>
    <property type="evidence" value="ECO:0007669"/>
    <property type="project" value="UniProtKB-UniRule"/>
</dbReference>
<dbReference type="GO" id="GO:0046166">
    <property type="term" value="P:glyceraldehyde-3-phosphate biosynthetic process"/>
    <property type="evidence" value="ECO:0007669"/>
    <property type="project" value="TreeGrafter"/>
</dbReference>
<dbReference type="GO" id="GO:0019563">
    <property type="term" value="P:glycerol catabolic process"/>
    <property type="evidence" value="ECO:0007669"/>
    <property type="project" value="TreeGrafter"/>
</dbReference>
<dbReference type="GO" id="GO:0006096">
    <property type="term" value="P:glycolytic process"/>
    <property type="evidence" value="ECO:0007669"/>
    <property type="project" value="UniProtKB-UniRule"/>
</dbReference>
<dbReference type="CDD" id="cd00311">
    <property type="entry name" value="TIM"/>
    <property type="match status" value="1"/>
</dbReference>
<dbReference type="FunFam" id="3.20.20.70:FF:000020">
    <property type="entry name" value="Triosephosphate isomerase"/>
    <property type="match status" value="1"/>
</dbReference>
<dbReference type="Gene3D" id="3.20.20.70">
    <property type="entry name" value="Aldolase class I"/>
    <property type="match status" value="1"/>
</dbReference>
<dbReference type="HAMAP" id="MF_00147_B">
    <property type="entry name" value="TIM_B"/>
    <property type="match status" value="1"/>
</dbReference>
<dbReference type="InterPro" id="IPR013785">
    <property type="entry name" value="Aldolase_TIM"/>
</dbReference>
<dbReference type="InterPro" id="IPR035990">
    <property type="entry name" value="TIM_sf"/>
</dbReference>
<dbReference type="InterPro" id="IPR022896">
    <property type="entry name" value="TrioseP_Isoase_bac/euk"/>
</dbReference>
<dbReference type="InterPro" id="IPR000652">
    <property type="entry name" value="Triosephosphate_isomerase"/>
</dbReference>
<dbReference type="InterPro" id="IPR020861">
    <property type="entry name" value="Triosephosphate_isomerase_AS"/>
</dbReference>
<dbReference type="NCBIfam" id="TIGR00419">
    <property type="entry name" value="tim"/>
    <property type="match status" value="1"/>
</dbReference>
<dbReference type="PANTHER" id="PTHR21139">
    <property type="entry name" value="TRIOSEPHOSPHATE ISOMERASE"/>
    <property type="match status" value="1"/>
</dbReference>
<dbReference type="PANTHER" id="PTHR21139:SF42">
    <property type="entry name" value="TRIOSEPHOSPHATE ISOMERASE"/>
    <property type="match status" value="1"/>
</dbReference>
<dbReference type="Pfam" id="PF00121">
    <property type="entry name" value="TIM"/>
    <property type="match status" value="1"/>
</dbReference>
<dbReference type="SUPFAM" id="SSF51351">
    <property type="entry name" value="Triosephosphate isomerase (TIM)"/>
    <property type="match status" value="1"/>
</dbReference>
<dbReference type="PROSITE" id="PS00171">
    <property type="entry name" value="TIM_1"/>
    <property type="match status" value="1"/>
</dbReference>
<dbReference type="PROSITE" id="PS51440">
    <property type="entry name" value="TIM_2"/>
    <property type="match status" value="1"/>
</dbReference>
<organism>
    <name type="scientific">Mycobacterium avium (strain 104)</name>
    <dbReference type="NCBI Taxonomy" id="243243"/>
    <lineage>
        <taxon>Bacteria</taxon>
        <taxon>Bacillati</taxon>
        <taxon>Actinomycetota</taxon>
        <taxon>Actinomycetes</taxon>
        <taxon>Mycobacteriales</taxon>
        <taxon>Mycobacteriaceae</taxon>
        <taxon>Mycobacterium</taxon>
        <taxon>Mycobacterium avium complex (MAC)</taxon>
    </lineage>
</organism>
<keyword id="KW-0963">Cytoplasm</keyword>
<keyword id="KW-0312">Gluconeogenesis</keyword>
<keyword id="KW-0324">Glycolysis</keyword>
<keyword id="KW-0413">Isomerase</keyword>
<accession>A0QHY3</accession>
<reference key="1">
    <citation type="submission" date="2006-10" db="EMBL/GenBank/DDBJ databases">
        <authorList>
            <person name="Fleischmann R.D."/>
            <person name="Dodson R.J."/>
            <person name="Haft D.H."/>
            <person name="Merkel J.S."/>
            <person name="Nelson W.C."/>
            <person name="Fraser C.M."/>
        </authorList>
    </citation>
    <scope>NUCLEOTIDE SEQUENCE [LARGE SCALE GENOMIC DNA]</scope>
    <source>
        <strain>104</strain>
    </source>
</reference>
<gene>
    <name evidence="1" type="primary">tpiA</name>
    <name type="ordered locus">MAV_3339</name>
</gene>
<sequence length="261" mass="27515">MSRKPLIAGNWKMNLNHFEAIALVQKIAFALPDKYYDKVDVTVLPPFTDLRSVQTLVDGDKLRLSYGAQDLSQHDSGAYTGDISGAFLAKLGCTFVVVGHSERRTYHNEDDALVAAKAAAALKHELTPIICIGEHLEVREAGNHVIHCEEQLRGSLAGLSAEQIGKVVIAYEPVWAIGTGRVASASDAQEVCAAIRKELASLASAQIADSVRVLYGGSVNAKNVGELIAQDDIDGGLVGGASLDGEQFATLAAIAAGGPLP</sequence>
<protein>
    <recommendedName>
        <fullName evidence="1">Triosephosphate isomerase</fullName>
        <shortName evidence="1">TIM</shortName>
        <shortName evidence="1">TPI</shortName>
        <ecNumber evidence="1">5.3.1.1</ecNumber>
    </recommendedName>
    <alternativeName>
        <fullName evidence="1">Triose-phosphate isomerase</fullName>
    </alternativeName>
</protein>